<reference key="1">
    <citation type="journal article" date="1995" name="J. Mol. Biol.">
        <title>The mitochondrial DNA of the amoeboid protozoon, Acanthamoeba castellanii: complete sequence, gene content and genome organization.</title>
        <authorList>
            <person name="Burger G."/>
            <person name="Plante I."/>
            <person name="Lonergan K.M."/>
            <person name="Gray M.W."/>
        </authorList>
    </citation>
    <scope>NUCLEOTIDE SEQUENCE [GENOMIC DNA]</scope>
    <source>
        <strain>ATCC 30010 / Neff</strain>
    </source>
</reference>
<keyword id="KW-0249">Electron transport</keyword>
<keyword id="KW-0472">Membrane</keyword>
<keyword id="KW-0496">Mitochondrion</keyword>
<keyword id="KW-0999">Mitochondrion inner membrane</keyword>
<keyword id="KW-0520">NAD</keyword>
<keyword id="KW-0560">Oxidoreductase</keyword>
<keyword id="KW-0679">Respiratory chain</keyword>
<keyword id="KW-1278">Translocase</keyword>
<keyword id="KW-0813">Transport</keyword>
<keyword id="KW-0830">Ubiquinone</keyword>
<protein>
    <recommendedName>
        <fullName>NADH-ubiquinone oxidoreductase subunit 9</fullName>
        <ecNumber>7.1.1.2</ecNumber>
    </recommendedName>
</protein>
<dbReference type="EC" id="7.1.1.2"/>
<dbReference type="EMBL" id="U12386">
    <property type="protein sequence ID" value="AAD11853.1"/>
    <property type="molecule type" value="Genomic_DNA"/>
</dbReference>
<dbReference type="PIR" id="S53861">
    <property type="entry name" value="S53861"/>
</dbReference>
<dbReference type="RefSeq" id="NP_042560.1">
    <property type="nucleotide sequence ID" value="NC_001637.1"/>
</dbReference>
<dbReference type="SMR" id="Q37383"/>
<dbReference type="GeneID" id="1734055"/>
<dbReference type="GO" id="GO:0005743">
    <property type="term" value="C:mitochondrial inner membrane"/>
    <property type="evidence" value="ECO:0007669"/>
    <property type="project" value="UniProtKB-SubCell"/>
</dbReference>
<dbReference type="GO" id="GO:0008137">
    <property type="term" value="F:NADH dehydrogenase (ubiquinone) activity"/>
    <property type="evidence" value="ECO:0007669"/>
    <property type="project" value="UniProtKB-EC"/>
</dbReference>
<dbReference type="Gene3D" id="3.30.460.80">
    <property type="entry name" value="NADH:ubiquinone oxidoreductase, 30kDa subunit"/>
    <property type="match status" value="1"/>
</dbReference>
<dbReference type="HAMAP" id="MF_01357">
    <property type="entry name" value="NDH1_NuoC"/>
    <property type="match status" value="1"/>
</dbReference>
<dbReference type="InterPro" id="IPR010218">
    <property type="entry name" value="NADH_DH_suC"/>
</dbReference>
<dbReference type="InterPro" id="IPR037232">
    <property type="entry name" value="NADH_quin_OxRdtase_su_C/D-like"/>
</dbReference>
<dbReference type="InterPro" id="IPR001268">
    <property type="entry name" value="NADH_UbQ_OxRdtase_30kDa_su"/>
</dbReference>
<dbReference type="InterPro" id="IPR020396">
    <property type="entry name" value="NADH_UbQ_OxRdtase_CS"/>
</dbReference>
<dbReference type="NCBIfam" id="TIGR01961">
    <property type="entry name" value="NuoC_fam"/>
    <property type="match status" value="1"/>
</dbReference>
<dbReference type="PANTHER" id="PTHR10884:SF14">
    <property type="entry name" value="NADH DEHYDROGENASE [UBIQUINONE] IRON-SULFUR PROTEIN 3, MITOCHONDRIAL"/>
    <property type="match status" value="1"/>
</dbReference>
<dbReference type="PANTHER" id="PTHR10884">
    <property type="entry name" value="NADH DEHYDROGENASE UBIQUINONE IRON-SULFUR PROTEIN 3"/>
    <property type="match status" value="1"/>
</dbReference>
<dbReference type="Pfam" id="PF00329">
    <property type="entry name" value="Complex1_30kDa"/>
    <property type="match status" value="1"/>
</dbReference>
<dbReference type="SUPFAM" id="SSF143243">
    <property type="entry name" value="Nqo5-like"/>
    <property type="match status" value="1"/>
</dbReference>
<dbReference type="PROSITE" id="PS00542">
    <property type="entry name" value="COMPLEX1_30K"/>
    <property type="match status" value="1"/>
</dbReference>
<evidence type="ECO:0000250" key="1"/>
<evidence type="ECO:0000305" key="2"/>
<geneLocation type="mitochondrion"/>
<organism>
    <name type="scientific">Acanthamoeba castellanii</name>
    <name type="common">Amoeba</name>
    <dbReference type="NCBI Taxonomy" id="5755"/>
    <lineage>
        <taxon>Eukaryota</taxon>
        <taxon>Amoebozoa</taxon>
        <taxon>Discosea</taxon>
        <taxon>Longamoebia</taxon>
        <taxon>Centramoebida</taxon>
        <taxon>Acanthamoebidae</taxon>
        <taxon>Acanthamoeba</taxon>
    </lineage>
</organism>
<gene>
    <name type="primary">NAD9</name>
</gene>
<proteinExistence type="inferred from homology"/>
<feature type="chain" id="PRO_0000118644" description="NADH-ubiquinone oxidoreductase subunit 9">
    <location>
        <begin position="1"/>
        <end position="195"/>
    </location>
</feature>
<name>NDUS3_ACACA</name>
<accession>Q37383</accession>
<sequence length="195" mass="23349">MGLNFFMSRKIYYIKLLTGLYKKFIKALIVKKNESNNAYLLVETANFYNLVFSLQRSSLTQFKVLNDVCIVDYPEKIDRFELSYNLSSIKYNFRIFIKTYTSAYVPSISTLFNSANWIERECWDMFGVFFTNHPDLRRILTDYGFEGFPLRKDFPLTGYIEIRYDDEKANIVYEPLELSQEYRLFNFTSPWEKIK</sequence>
<comment type="function">
    <text evidence="1">Core subunit of the mitochondrial membrane respiratory chain NADH dehydrogenase (Complex I) that is believed to belong to the minimal assembly required for catalysis. Complex I functions in the transfer of electrons from NADH to the respiratory chain. The immediate electron acceptor for the enzyme is believed to be ubiquinone (By similarity).</text>
</comment>
<comment type="catalytic activity">
    <reaction>
        <text>a ubiquinone + NADH + 5 H(+)(in) = a ubiquinol + NAD(+) + 4 H(+)(out)</text>
        <dbReference type="Rhea" id="RHEA:29091"/>
        <dbReference type="Rhea" id="RHEA-COMP:9565"/>
        <dbReference type="Rhea" id="RHEA-COMP:9566"/>
        <dbReference type="ChEBI" id="CHEBI:15378"/>
        <dbReference type="ChEBI" id="CHEBI:16389"/>
        <dbReference type="ChEBI" id="CHEBI:17976"/>
        <dbReference type="ChEBI" id="CHEBI:57540"/>
        <dbReference type="ChEBI" id="CHEBI:57945"/>
        <dbReference type="EC" id="7.1.1.2"/>
    </reaction>
</comment>
<comment type="subunit">
    <text>Complex I is composed of about 30 different subunits.</text>
</comment>
<comment type="subcellular location">
    <subcellularLocation>
        <location>Mitochondrion inner membrane</location>
    </subcellularLocation>
</comment>
<comment type="similarity">
    <text evidence="2">Belongs to the complex I 30 kDa subunit family.</text>
</comment>